<comment type="subcellular location">
    <subcellularLocation>
        <location evidence="3">Endoplasmic reticulum membrane</location>
        <topology evidence="3">Multi-pass membrane protein</topology>
    </subcellularLocation>
    <subcellularLocation>
        <location evidence="3">Nucleus membrane</location>
        <topology evidence="3">Multi-pass membrane protein</topology>
    </subcellularLocation>
</comment>
<protein>
    <recommendedName>
        <fullName>Uncharacterized membrane protein C1919.04</fullName>
    </recommendedName>
</protein>
<feature type="chain" id="PRO_0000304001" description="Uncharacterized membrane protein C1919.04">
    <location>
        <begin position="1"/>
        <end position="256"/>
    </location>
</feature>
<feature type="transmembrane region" description="Helical" evidence="1">
    <location>
        <begin position="5"/>
        <end position="25"/>
    </location>
</feature>
<feature type="transmembrane region" description="Helical" evidence="1">
    <location>
        <begin position="30"/>
        <end position="50"/>
    </location>
</feature>
<feature type="transmembrane region" description="Helical" evidence="1">
    <location>
        <begin position="64"/>
        <end position="84"/>
    </location>
</feature>
<feature type="transmembrane region" description="Helical" evidence="1">
    <location>
        <begin position="105"/>
        <end position="125"/>
    </location>
</feature>
<feature type="region of interest" description="Disordered" evidence="2">
    <location>
        <begin position="198"/>
        <end position="256"/>
    </location>
</feature>
<feature type="compositionally biased region" description="Low complexity" evidence="2">
    <location>
        <begin position="203"/>
        <end position="215"/>
    </location>
</feature>
<feature type="modified residue" description="Phosphoserine" evidence="4">
    <location>
        <position position="210"/>
    </location>
</feature>
<feature type="modified residue" description="Phosphoserine" evidence="4">
    <location>
        <position position="211"/>
    </location>
</feature>
<organism>
    <name type="scientific">Schizosaccharomyces pombe (strain 972 / ATCC 24843)</name>
    <name type="common">Fission yeast</name>
    <dbReference type="NCBI Taxonomy" id="284812"/>
    <lineage>
        <taxon>Eukaryota</taxon>
        <taxon>Fungi</taxon>
        <taxon>Dikarya</taxon>
        <taxon>Ascomycota</taxon>
        <taxon>Taphrinomycotina</taxon>
        <taxon>Schizosaccharomycetes</taxon>
        <taxon>Schizosaccharomycetales</taxon>
        <taxon>Schizosaccharomycetaceae</taxon>
        <taxon>Schizosaccharomyces</taxon>
    </lineage>
</organism>
<reference key="1">
    <citation type="journal article" date="2002" name="Nature">
        <title>The genome sequence of Schizosaccharomyces pombe.</title>
        <authorList>
            <person name="Wood V."/>
            <person name="Gwilliam R."/>
            <person name="Rajandream M.A."/>
            <person name="Lyne M.H."/>
            <person name="Lyne R."/>
            <person name="Stewart A."/>
            <person name="Sgouros J.G."/>
            <person name="Peat N."/>
            <person name="Hayles J."/>
            <person name="Baker S.G."/>
            <person name="Basham D."/>
            <person name="Bowman S."/>
            <person name="Brooks K."/>
            <person name="Brown D."/>
            <person name="Brown S."/>
            <person name="Chillingworth T."/>
            <person name="Churcher C.M."/>
            <person name="Collins M."/>
            <person name="Connor R."/>
            <person name="Cronin A."/>
            <person name="Davis P."/>
            <person name="Feltwell T."/>
            <person name="Fraser A."/>
            <person name="Gentles S."/>
            <person name="Goble A."/>
            <person name="Hamlin N."/>
            <person name="Harris D.E."/>
            <person name="Hidalgo J."/>
            <person name="Hodgson G."/>
            <person name="Holroyd S."/>
            <person name="Hornsby T."/>
            <person name="Howarth S."/>
            <person name="Huckle E.J."/>
            <person name="Hunt S."/>
            <person name="Jagels K."/>
            <person name="James K.D."/>
            <person name="Jones L."/>
            <person name="Jones M."/>
            <person name="Leather S."/>
            <person name="McDonald S."/>
            <person name="McLean J."/>
            <person name="Mooney P."/>
            <person name="Moule S."/>
            <person name="Mungall K.L."/>
            <person name="Murphy L.D."/>
            <person name="Niblett D."/>
            <person name="Odell C."/>
            <person name="Oliver K."/>
            <person name="O'Neil S."/>
            <person name="Pearson D."/>
            <person name="Quail M.A."/>
            <person name="Rabbinowitsch E."/>
            <person name="Rutherford K.M."/>
            <person name="Rutter S."/>
            <person name="Saunders D."/>
            <person name="Seeger K."/>
            <person name="Sharp S."/>
            <person name="Skelton J."/>
            <person name="Simmonds M.N."/>
            <person name="Squares R."/>
            <person name="Squares S."/>
            <person name="Stevens K."/>
            <person name="Taylor K."/>
            <person name="Taylor R.G."/>
            <person name="Tivey A."/>
            <person name="Walsh S.V."/>
            <person name="Warren T."/>
            <person name="Whitehead S."/>
            <person name="Woodward J.R."/>
            <person name="Volckaert G."/>
            <person name="Aert R."/>
            <person name="Robben J."/>
            <person name="Grymonprez B."/>
            <person name="Weltjens I."/>
            <person name="Vanstreels E."/>
            <person name="Rieger M."/>
            <person name="Schaefer M."/>
            <person name="Mueller-Auer S."/>
            <person name="Gabel C."/>
            <person name="Fuchs M."/>
            <person name="Duesterhoeft A."/>
            <person name="Fritzc C."/>
            <person name="Holzer E."/>
            <person name="Moestl D."/>
            <person name="Hilbert H."/>
            <person name="Borzym K."/>
            <person name="Langer I."/>
            <person name="Beck A."/>
            <person name="Lehrach H."/>
            <person name="Reinhardt R."/>
            <person name="Pohl T.M."/>
            <person name="Eger P."/>
            <person name="Zimmermann W."/>
            <person name="Wedler H."/>
            <person name="Wambutt R."/>
            <person name="Purnelle B."/>
            <person name="Goffeau A."/>
            <person name="Cadieu E."/>
            <person name="Dreano S."/>
            <person name="Gloux S."/>
            <person name="Lelaure V."/>
            <person name="Mottier S."/>
            <person name="Galibert F."/>
            <person name="Aves S.J."/>
            <person name="Xiang Z."/>
            <person name="Hunt C."/>
            <person name="Moore K."/>
            <person name="Hurst S.M."/>
            <person name="Lucas M."/>
            <person name="Rochet M."/>
            <person name="Gaillardin C."/>
            <person name="Tallada V.A."/>
            <person name="Garzon A."/>
            <person name="Thode G."/>
            <person name="Daga R.R."/>
            <person name="Cruzado L."/>
            <person name="Jimenez J."/>
            <person name="Sanchez M."/>
            <person name="del Rey F."/>
            <person name="Benito J."/>
            <person name="Dominguez A."/>
            <person name="Revuelta J.L."/>
            <person name="Moreno S."/>
            <person name="Armstrong J."/>
            <person name="Forsburg S.L."/>
            <person name="Cerutti L."/>
            <person name="Lowe T."/>
            <person name="McCombie W.R."/>
            <person name="Paulsen I."/>
            <person name="Potashkin J."/>
            <person name="Shpakovski G.V."/>
            <person name="Ussery D."/>
            <person name="Barrell B.G."/>
            <person name="Nurse P."/>
        </authorList>
    </citation>
    <scope>NUCLEOTIDE SEQUENCE [LARGE SCALE GENOMIC DNA]</scope>
    <source>
        <strain>972 / ATCC 24843</strain>
    </source>
</reference>
<reference key="2">
    <citation type="journal article" date="2006" name="Nat. Biotechnol.">
        <title>ORFeome cloning and global analysis of protein localization in the fission yeast Schizosaccharomyces pombe.</title>
        <authorList>
            <person name="Matsuyama A."/>
            <person name="Arai R."/>
            <person name="Yashiroda Y."/>
            <person name="Shirai A."/>
            <person name="Kamata A."/>
            <person name="Sekido S."/>
            <person name="Kobayashi Y."/>
            <person name="Hashimoto A."/>
            <person name="Hamamoto M."/>
            <person name="Hiraoka Y."/>
            <person name="Horinouchi S."/>
            <person name="Yoshida M."/>
        </authorList>
    </citation>
    <scope>SUBCELLULAR LOCATION [LARGE SCALE ANALYSIS]</scope>
</reference>
<reference key="3">
    <citation type="journal article" date="2008" name="J. Proteome Res.">
        <title>Phosphoproteome analysis of fission yeast.</title>
        <authorList>
            <person name="Wilson-Grady J.T."/>
            <person name="Villen J."/>
            <person name="Gygi S.P."/>
        </authorList>
    </citation>
    <scope>PHOSPHORYLATION [LARGE SCALE ANALYSIS] AT SER-210 AND SER-211</scope>
    <scope>IDENTIFICATION BY MASS SPECTROMETRY</scope>
</reference>
<keyword id="KW-0256">Endoplasmic reticulum</keyword>
<keyword id="KW-0472">Membrane</keyword>
<keyword id="KW-0539">Nucleus</keyword>
<keyword id="KW-0597">Phosphoprotein</keyword>
<keyword id="KW-1185">Reference proteome</keyword>
<keyword id="KW-0812">Transmembrane</keyword>
<keyword id="KW-1133">Transmembrane helix</keyword>
<accession>O94473</accession>
<sequence>MDLSFIEGFETIWTVVRAVVLNYLLRSLKILSTILYVSAVISWNVSLKVFGNVLLPGFLTIRTVVIFILRIVSLFLWILADPAILLVQSVYWYFIRAPARFILMVGITLYPLYVLLSWAVFLGIIVGFSLNSVFTFIDSFATPSSNSTVTEAMTKMKNEKVLEYPYKDRNIMLGDLASRIPSKDSEKLDEERQPIALEKTKSLDSISHSSSSSRKSSTELKIPPVETRIVAEIPVPSSVKRRRHRPNKSMGSIKNS</sequence>
<proteinExistence type="evidence at protein level"/>
<name>YC64_SCHPO</name>
<evidence type="ECO:0000255" key="1"/>
<evidence type="ECO:0000256" key="2">
    <source>
        <dbReference type="SAM" id="MobiDB-lite"/>
    </source>
</evidence>
<evidence type="ECO:0000269" key="3">
    <source>
    </source>
</evidence>
<evidence type="ECO:0000269" key="4">
    <source>
    </source>
</evidence>
<gene>
    <name type="ORF">SPCC1919.04</name>
</gene>
<dbReference type="EMBL" id="CU329672">
    <property type="protein sequence ID" value="CAA22635.1"/>
    <property type="molecule type" value="Genomic_DNA"/>
</dbReference>
<dbReference type="PIR" id="T41229">
    <property type="entry name" value="T41229"/>
</dbReference>
<dbReference type="RefSeq" id="NP_588486.1">
    <property type="nucleotide sequence ID" value="NM_001023477.2"/>
</dbReference>
<dbReference type="STRING" id="284812.O94473"/>
<dbReference type="iPTMnet" id="O94473"/>
<dbReference type="PaxDb" id="4896-SPCC1919.04.1"/>
<dbReference type="EnsemblFungi" id="SPCC1919.04.1">
    <property type="protein sequence ID" value="SPCC1919.04.1:pep"/>
    <property type="gene ID" value="SPCC1919.04"/>
</dbReference>
<dbReference type="KEGG" id="spo:2538919"/>
<dbReference type="PomBase" id="SPCC1919.04"/>
<dbReference type="VEuPathDB" id="FungiDB:SPCC1919.04"/>
<dbReference type="HOGENOM" id="CLU_1086481_0_0_1"/>
<dbReference type="InParanoid" id="O94473"/>
<dbReference type="OMA" id="WYFIRAP"/>
<dbReference type="PRO" id="PR:O94473"/>
<dbReference type="Proteomes" id="UP000002485">
    <property type="component" value="Chromosome III"/>
</dbReference>
<dbReference type="GO" id="GO:0005783">
    <property type="term" value="C:endoplasmic reticulum"/>
    <property type="evidence" value="ECO:0007005"/>
    <property type="project" value="PomBase"/>
</dbReference>
<dbReference type="GO" id="GO:0005789">
    <property type="term" value="C:endoplasmic reticulum membrane"/>
    <property type="evidence" value="ECO:0007669"/>
    <property type="project" value="UniProtKB-SubCell"/>
</dbReference>
<dbReference type="GO" id="GO:0005635">
    <property type="term" value="C:nuclear envelope"/>
    <property type="evidence" value="ECO:0007005"/>
    <property type="project" value="PomBase"/>
</dbReference>
<dbReference type="GO" id="GO:0031965">
    <property type="term" value="C:nuclear membrane"/>
    <property type="evidence" value="ECO:0007669"/>
    <property type="project" value="UniProtKB-SubCell"/>
</dbReference>